<reference key="1">
    <citation type="journal article" date="2001" name="Biochim. Biophys. Acta">
        <title>Acyl-CoA-binding protein in the armadillo Harderian gland: its primary structure and possible role in lipid secretion.</title>
        <authorList>
            <person name="Cavagnari B.M."/>
            <person name="Sterin-Speziale N."/>
            <person name="Affanni J.M."/>
            <person name="Knudsen J."/>
            <person name="Santome J.A."/>
        </authorList>
    </citation>
    <scope>PROTEIN SEQUENCE OF 2-87</scope>
    <scope>ACETYLATION AT SER-2</scope>
    <source>
        <tissue>Harderian gland</tissue>
    </source>
</reference>
<reference key="2">
    <citation type="journal article" date="2006" name="Acta Crystallogr. F">
        <title>Structure of armadillo ACBP: a new member of the acyl-CoA-binding protein family.</title>
        <authorList>
            <person name="Costabel M.D."/>
            <person name="Ermacora M.R."/>
            <person name="Santome J.A."/>
            <person name="Alzari P.M."/>
            <person name="Guerin D.M.A."/>
        </authorList>
    </citation>
    <scope>X-RAY CRYSTALLOGRAPHY (3.5 ANGSTROMS)</scope>
</reference>
<evidence type="ECO:0000250" key="1"/>
<evidence type="ECO:0000250" key="2">
    <source>
        <dbReference type="UniProtKB" id="P07108"/>
    </source>
</evidence>
<evidence type="ECO:0000250" key="3">
    <source>
        <dbReference type="UniProtKB" id="P31786"/>
    </source>
</evidence>
<evidence type="ECO:0000255" key="4">
    <source>
        <dbReference type="PROSITE-ProRule" id="PRU00573"/>
    </source>
</evidence>
<evidence type="ECO:0000269" key="5">
    <source>
    </source>
</evidence>
<evidence type="ECO:0000305" key="6"/>
<evidence type="ECO:0007829" key="7">
    <source>
        <dbReference type="PDB" id="2FDQ"/>
    </source>
</evidence>
<dbReference type="PDB" id="2FDQ">
    <property type="method" value="X-ray"/>
    <property type="resolution" value="3.50 A"/>
    <property type="chains" value="A/B/C=2-87"/>
</dbReference>
<dbReference type="PDBsum" id="2FDQ"/>
<dbReference type="SMR" id="P82934"/>
<dbReference type="iPTMnet" id="P82934"/>
<dbReference type="EvolutionaryTrace" id="P82934"/>
<dbReference type="GO" id="GO:0005783">
    <property type="term" value="C:endoplasmic reticulum"/>
    <property type="evidence" value="ECO:0007669"/>
    <property type="project" value="UniProtKB-SubCell"/>
</dbReference>
<dbReference type="GO" id="GO:0005794">
    <property type="term" value="C:Golgi apparatus"/>
    <property type="evidence" value="ECO:0007669"/>
    <property type="project" value="UniProtKB-SubCell"/>
</dbReference>
<dbReference type="GO" id="GO:0005739">
    <property type="term" value="C:mitochondrion"/>
    <property type="evidence" value="ECO:0007669"/>
    <property type="project" value="TreeGrafter"/>
</dbReference>
<dbReference type="GO" id="GO:0000062">
    <property type="term" value="F:fatty-acyl-CoA binding"/>
    <property type="evidence" value="ECO:0007669"/>
    <property type="project" value="InterPro"/>
</dbReference>
<dbReference type="GO" id="GO:0006631">
    <property type="term" value="P:fatty acid metabolic process"/>
    <property type="evidence" value="ECO:0007669"/>
    <property type="project" value="TreeGrafter"/>
</dbReference>
<dbReference type="CDD" id="cd00435">
    <property type="entry name" value="ACBP"/>
    <property type="match status" value="1"/>
</dbReference>
<dbReference type="FunFam" id="1.20.80.10:FF:000010">
    <property type="entry name" value="Acyl-CoA-binding domain-containing protein 5"/>
    <property type="match status" value="1"/>
</dbReference>
<dbReference type="Gene3D" id="1.20.80.10">
    <property type="match status" value="1"/>
</dbReference>
<dbReference type="InterPro" id="IPR022408">
    <property type="entry name" value="Acyl-CoA-binding_prot_CS"/>
</dbReference>
<dbReference type="InterPro" id="IPR000582">
    <property type="entry name" value="Acyl-CoA-binding_protein"/>
</dbReference>
<dbReference type="InterPro" id="IPR035984">
    <property type="entry name" value="Acyl-CoA-binding_sf"/>
</dbReference>
<dbReference type="InterPro" id="IPR014352">
    <property type="entry name" value="FERM/acyl-CoA-bd_prot_sf"/>
</dbReference>
<dbReference type="PANTHER" id="PTHR23310:SF54">
    <property type="entry name" value="ACYL-COA-BINDING PROTEIN"/>
    <property type="match status" value="1"/>
</dbReference>
<dbReference type="PANTHER" id="PTHR23310">
    <property type="entry name" value="ACYL-COA-BINDING PROTEIN, ACBP"/>
    <property type="match status" value="1"/>
</dbReference>
<dbReference type="Pfam" id="PF00887">
    <property type="entry name" value="ACBP"/>
    <property type="match status" value="1"/>
</dbReference>
<dbReference type="PRINTS" id="PR00689">
    <property type="entry name" value="ACOABINDINGP"/>
</dbReference>
<dbReference type="SUPFAM" id="SSF47027">
    <property type="entry name" value="Acyl-CoA binding protein"/>
    <property type="match status" value="1"/>
</dbReference>
<dbReference type="PROSITE" id="PS00880">
    <property type="entry name" value="ACB_1"/>
    <property type="match status" value="1"/>
</dbReference>
<dbReference type="PROSITE" id="PS51228">
    <property type="entry name" value="ACB_2"/>
    <property type="match status" value="1"/>
</dbReference>
<proteinExistence type="evidence at protein level"/>
<keyword id="KW-0002">3D-structure</keyword>
<keyword id="KW-0007">Acetylation</keyword>
<keyword id="KW-0903">Direct protein sequencing</keyword>
<keyword id="KW-0256">Endoplasmic reticulum</keyword>
<keyword id="KW-0333">Golgi apparatus</keyword>
<keyword id="KW-0379">Hydroxylation</keyword>
<keyword id="KW-0446">Lipid-binding</keyword>
<keyword id="KW-0597">Phosphoprotein</keyword>
<keyword id="KW-0813">Transport</keyword>
<accession>P82934</accession>
<gene>
    <name type="primary">DBI</name>
</gene>
<comment type="function">
    <text>Binds medium- and long-chain acyl-CoA esters with very high affinity and may function as an intracellular carrier of acyl-CoA esters.</text>
</comment>
<comment type="subunit">
    <text evidence="1">Monomer.</text>
</comment>
<comment type="subcellular location">
    <subcellularLocation>
        <location evidence="2">Endoplasmic reticulum</location>
    </subcellularLocation>
    <subcellularLocation>
        <location evidence="2">Golgi apparatus</location>
    </subcellularLocation>
    <text evidence="2">Golgi localization is dependent on ligand binding.</text>
</comment>
<comment type="similarity">
    <text evidence="6">Belongs to the ACBP family.</text>
</comment>
<name>ACBP_CHAVI</name>
<organism>
    <name type="scientific">Chaetophractus villosus</name>
    <name type="common">South American armadillo</name>
    <dbReference type="NCBI Taxonomy" id="29080"/>
    <lineage>
        <taxon>Eukaryota</taxon>
        <taxon>Metazoa</taxon>
        <taxon>Chordata</taxon>
        <taxon>Craniata</taxon>
        <taxon>Vertebrata</taxon>
        <taxon>Euteleostomi</taxon>
        <taxon>Mammalia</taxon>
        <taxon>Eutheria</taxon>
        <taxon>Xenarthra</taxon>
        <taxon>Cingulata</taxon>
        <taxon>Chlamyphoridae</taxon>
        <taxon>Chaetophractus</taxon>
    </lineage>
</organism>
<protein>
    <recommendedName>
        <fullName>Acyl-CoA-binding protein</fullName>
        <shortName>ACBP</shortName>
    </recommendedName>
    <alternativeName>
        <fullName>EP</fullName>
    </alternativeName>
</protein>
<feature type="initiator methionine" description="Removed" evidence="5">
    <location>
        <position position="1"/>
    </location>
</feature>
<feature type="chain" id="PRO_0000214003" description="Acyl-CoA-binding protein">
    <location>
        <begin position="2"/>
        <end position="87"/>
    </location>
</feature>
<feature type="domain" description="ACB" evidence="4">
    <location>
        <begin position="2"/>
        <end position="87"/>
    </location>
</feature>
<feature type="binding site" evidence="1">
    <location>
        <position position="14"/>
    </location>
    <ligand>
        <name>an acyl-CoA</name>
        <dbReference type="ChEBI" id="CHEBI:58342"/>
    </ligand>
</feature>
<feature type="binding site" evidence="1">
    <location>
        <begin position="29"/>
        <end position="33"/>
    </location>
    <ligand>
        <name>an acyl-CoA</name>
        <dbReference type="ChEBI" id="CHEBI:58342"/>
    </ligand>
</feature>
<feature type="binding site" evidence="1">
    <location>
        <position position="51"/>
    </location>
    <ligand>
        <name>an acyl-CoA</name>
        <dbReference type="ChEBI" id="CHEBI:58342"/>
    </ligand>
</feature>
<feature type="binding site" evidence="1">
    <location>
        <position position="55"/>
    </location>
    <ligand>
        <name>an acyl-CoA</name>
        <dbReference type="ChEBI" id="CHEBI:58342"/>
    </ligand>
</feature>
<feature type="binding site" evidence="1">
    <location>
        <position position="74"/>
    </location>
    <ligand>
        <name>an acyl-CoA</name>
        <dbReference type="ChEBI" id="CHEBI:58342"/>
    </ligand>
</feature>
<feature type="modified residue" description="N-acetylserine" evidence="5">
    <location>
        <position position="2"/>
    </location>
</feature>
<feature type="modified residue" description="N6-acetyllysine; alternate" evidence="2">
    <location>
        <position position="8"/>
    </location>
</feature>
<feature type="modified residue" description="N6-succinyllysine; alternate" evidence="3">
    <location>
        <position position="8"/>
    </location>
</feature>
<feature type="modified residue" description="N6-succinyllysine" evidence="3">
    <location>
        <position position="17"/>
    </location>
</feature>
<feature type="modified residue" description="N6-acetyllysine" evidence="2">
    <location>
        <position position="19"/>
    </location>
</feature>
<feature type="modified residue" description="Phosphotyrosine" evidence="2">
    <location>
        <position position="29"/>
    </location>
</feature>
<feature type="modified residue" description="N6-acetyllysine" evidence="3">
    <location>
        <position position="51"/>
    </location>
</feature>
<feature type="modified residue" description="N6-(2-hydroxyisobutyryl)lysine; alternate" evidence="2">
    <location>
        <position position="55"/>
    </location>
</feature>
<feature type="modified residue" description="N6-acetyllysine; alternate" evidence="2">
    <location>
        <position position="55"/>
    </location>
</feature>
<feature type="modified residue" description="N6-malonyllysine; alternate" evidence="1">
    <location>
        <position position="55"/>
    </location>
</feature>
<feature type="modified residue" description="N6-succinyllysine; alternate" evidence="3">
    <location>
        <position position="55"/>
    </location>
</feature>
<feature type="modified residue" description="N6-acetyllysine; alternate" evidence="2">
    <location>
        <position position="77"/>
    </location>
</feature>
<feature type="modified residue" description="N6-succinyllysine; alternate" evidence="3">
    <location>
        <position position="77"/>
    </location>
</feature>
<feature type="helix" evidence="7">
    <location>
        <begin position="3"/>
        <end position="13"/>
    </location>
</feature>
<feature type="helix" evidence="7">
    <location>
        <begin position="22"/>
        <end position="36"/>
    </location>
</feature>
<feature type="helix" evidence="7">
    <location>
        <begin position="50"/>
        <end position="60"/>
    </location>
</feature>
<feature type="turn" evidence="7">
    <location>
        <begin position="61"/>
        <end position="64"/>
    </location>
</feature>
<feature type="helix" evidence="7">
    <location>
        <begin position="67"/>
        <end position="85"/>
    </location>
</feature>
<sequence>MSQAEFDKAAEEVKNLKTKPADDEMLFIYSHYKQATVGDINTERPGMLDFKGKAKWDAWNQLKGTSKEDAMKSYIDKVEELKKKYGI</sequence>